<proteinExistence type="inferred from homology"/>
<evidence type="ECO:0000255" key="1">
    <source>
        <dbReference type="HAMAP-Rule" id="MF_01446"/>
    </source>
</evidence>
<reference key="1">
    <citation type="journal article" date="2001" name="DNA Res.">
        <title>Complete genome sequence of an aerobic thermoacidophilic Crenarchaeon, Sulfolobus tokodaii strain7.</title>
        <authorList>
            <person name="Kawarabayasi Y."/>
            <person name="Hino Y."/>
            <person name="Horikawa H."/>
            <person name="Jin-no K."/>
            <person name="Takahashi M."/>
            <person name="Sekine M."/>
            <person name="Baba S."/>
            <person name="Ankai A."/>
            <person name="Kosugi H."/>
            <person name="Hosoyama A."/>
            <person name="Fukui S."/>
            <person name="Nagai Y."/>
            <person name="Nishijima K."/>
            <person name="Otsuka R."/>
            <person name="Nakazawa H."/>
            <person name="Takamiya M."/>
            <person name="Kato Y."/>
            <person name="Yoshizawa T."/>
            <person name="Tanaka T."/>
            <person name="Kudoh Y."/>
            <person name="Yamazaki J."/>
            <person name="Kushida N."/>
            <person name="Oguchi A."/>
            <person name="Aoki K."/>
            <person name="Masuda S."/>
            <person name="Yanagii M."/>
            <person name="Nishimura M."/>
            <person name="Yamagishi A."/>
            <person name="Oshima T."/>
            <person name="Kikuchi H."/>
        </authorList>
    </citation>
    <scope>NUCLEOTIDE SEQUENCE [LARGE SCALE GENOMIC DNA]</scope>
    <source>
        <strain>DSM 16993 / JCM 10545 / NBRC 100140 / 7</strain>
    </source>
</reference>
<dbReference type="EC" id="2.3.1.234" evidence="1"/>
<dbReference type="EMBL" id="BA000023">
    <property type="protein sequence ID" value="BAK54250.1"/>
    <property type="molecule type" value="Genomic_DNA"/>
</dbReference>
<dbReference type="RefSeq" id="WP_010978326.1">
    <property type="nucleotide sequence ID" value="NC_003106.2"/>
</dbReference>
<dbReference type="SMR" id="Q975Q7"/>
<dbReference type="STRING" id="273063.STK_03630"/>
<dbReference type="GeneID" id="1458287"/>
<dbReference type="KEGG" id="sto:STK_03630"/>
<dbReference type="PATRIC" id="fig|273063.9.peg.423"/>
<dbReference type="eggNOG" id="arCOG01183">
    <property type="taxonomic scope" value="Archaea"/>
</dbReference>
<dbReference type="OrthoDB" id="6818at2157"/>
<dbReference type="Proteomes" id="UP000001015">
    <property type="component" value="Chromosome"/>
</dbReference>
<dbReference type="GO" id="GO:0005737">
    <property type="term" value="C:cytoplasm"/>
    <property type="evidence" value="ECO:0007669"/>
    <property type="project" value="UniProtKB-SubCell"/>
</dbReference>
<dbReference type="GO" id="GO:0000408">
    <property type="term" value="C:EKC/KEOPS complex"/>
    <property type="evidence" value="ECO:0007669"/>
    <property type="project" value="InterPro"/>
</dbReference>
<dbReference type="GO" id="GO:0005506">
    <property type="term" value="F:iron ion binding"/>
    <property type="evidence" value="ECO:0007669"/>
    <property type="project" value="UniProtKB-UniRule"/>
</dbReference>
<dbReference type="GO" id="GO:0061711">
    <property type="term" value="F:N(6)-L-threonylcarbamoyladenine synthase activity"/>
    <property type="evidence" value="ECO:0007669"/>
    <property type="project" value="UniProtKB-EC"/>
</dbReference>
<dbReference type="GO" id="GO:0002949">
    <property type="term" value="P:tRNA threonylcarbamoyladenosine modification"/>
    <property type="evidence" value="ECO:0007669"/>
    <property type="project" value="UniProtKB-UniRule"/>
</dbReference>
<dbReference type="CDD" id="cd24131">
    <property type="entry name" value="ASKHA_NBD_Kae1_arch_bac"/>
    <property type="match status" value="1"/>
</dbReference>
<dbReference type="FunFam" id="3.30.420.40:FF:000229">
    <property type="entry name" value="tRNA N6-adenosine threonylcarbamoyltransferase"/>
    <property type="match status" value="1"/>
</dbReference>
<dbReference type="Gene3D" id="3.30.420.40">
    <property type="match status" value="2"/>
</dbReference>
<dbReference type="HAMAP" id="MF_01446">
    <property type="entry name" value="Kae1"/>
    <property type="match status" value="1"/>
</dbReference>
<dbReference type="InterPro" id="IPR043129">
    <property type="entry name" value="ATPase_NBD"/>
</dbReference>
<dbReference type="InterPro" id="IPR000905">
    <property type="entry name" value="Gcp-like_dom"/>
</dbReference>
<dbReference type="InterPro" id="IPR017861">
    <property type="entry name" value="KAE1/TsaD"/>
</dbReference>
<dbReference type="InterPro" id="IPR034680">
    <property type="entry name" value="Kae1_archaea_euk"/>
</dbReference>
<dbReference type="NCBIfam" id="TIGR03722">
    <property type="entry name" value="arch_KAE1"/>
    <property type="match status" value="1"/>
</dbReference>
<dbReference type="NCBIfam" id="TIGR00329">
    <property type="entry name" value="gcp_kae1"/>
    <property type="match status" value="1"/>
</dbReference>
<dbReference type="PANTHER" id="PTHR11735">
    <property type="entry name" value="TRNA N6-ADENOSINE THREONYLCARBAMOYLTRANSFERASE"/>
    <property type="match status" value="1"/>
</dbReference>
<dbReference type="PANTHER" id="PTHR11735:SF14">
    <property type="entry name" value="TRNA N6-ADENOSINE THREONYLCARBAMOYLTRANSFERASE"/>
    <property type="match status" value="1"/>
</dbReference>
<dbReference type="Pfam" id="PF00814">
    <property type="entry name" value="TsaD"/>
    <property type="match status" value="1"/>
</dbReference>
<dbReference type="PRINTS" id="PR00789">
    <property type="entry name" value="OSIALOPTASE"/>
</dbReference>
<dbReference type="SUPFAM" id="SSF53067">
    <property type="entry name" value="Actin-like ATPase domain"/>
    <property type="match status" value="1"/>
</dbReference>
<feature type="chain" id="PRO_0000303646" description="tRNA N6-adenosine threonylcarbamoyltransferase">
    <location>
        <begin position="1"/>
        <end position="336"/>
    </location>
</feature>
<feature type="binding site" evidence="1">
    <location>
        <position position="111"/>
    </location>
    <ligand>
        <name>Fe cation</name>
        <dbReference type="ChEBI" id="CHEBI:24875"/>
    </ligand>
</feature>
<feature type="binding site" evidence="1">
    <location>
        <position position="115"/>
    </location>
    <ligand>
        <name>Fe cation</name>
        <dbReference type="ChEBI" id="CHEBI:24875"/>
    </ligand>
</feature>
<feature type="binding site" evidence="1">
    <location>
        <begin position="132"/>
        <end position="136"/>
    </location>
    <ligand>
        <name>substrate</name>
    </ligand>
</feature>
<feature type="binding site" evidence="1">
    <location>
        <position position="132"/>
    </location>
    <ligand>
        <name>Fe cation</name>
        <dbReference type="ChEBI" id="CHEBI:24875"/>
    </ligand>
</feature>
<feature type="binding site" evidence="1">
    <location>
        <position position="164"/>
    </location>
    <ligand>
        <name>substrate</name>
    </ligand>
</feature>
<feature type="binding site" evidence="1">
    <location>
        <position position="185"/>
    </location>
    <ligand>
        <name>substrate</name>
    </ligand>
</feature>
<feature type="binding site" evidence="1">
    <location>
        <position position="264"/>
    </location>
    <ligand>
        <name>substrate</name>
    </ligand>
</feature>
<feature type="binding site" evidence="1">
    <location>
        <position position="292"/>
    </location>
    <ligand>
        <name>Fe cation</name>
        <dbReference type="ChEBI" id="CHEBI:24875"/>
    </ligand>
</feature>
<organism>
    <name type="scientific">Sulfurisphaera tokodaii (strain DSM 16993 / JCM 10545 / NBRC 100140 / 7)</name>
    <name type="common">Sulfolobus tokodaii</name>
    <dbReference type="NCBI Taxonomy" id="273063"/>
    <lineage>
        <taxon>Archaea</taxon>
        <taxon>Thermoproteota</taxon>
        <taxon>Thermoprotei</taxon>
        <taxon>Sulfolobales</taxon>
        <taxon>Sulfolobaceae</taxon>
        <taxon>Sulfurisphaera</taxon>
    </lineage>
</organism>
<gene>
    <name evidence="1" type="primary">kae1</name>
    <name type="ordered locus">STK_03630</name>
</gene>
<name>KAE1_SULTO</name>
<comment type="function">
    <text evidence="1">Required for the formation of a threonylcarbamoyl group on adenosine at position 37 (t(6)A37) in tRNAs that read codons beginning with adenine. Is probably involved in the transfer of the threonylcarbamoyl moiety of threonylcarbamoyl-AMP (TC-AMP) to the N6 group of A37.</text>
</comment>
<comment type="catalytic activity">
    <reaction evidence="1">
        <text>L-threonylcarbamoyladenylate + adenosine(37) in tRNA = N(6)-L-threonylcarbamoyladenosine(37) in tRNA + AMP + H(+)</text>
        <dbReference type="Rhea" id="RHEA:37059"/>
        <dbReference type="Rhea" id="RHEA-COMP:10162"/>
        <dbReference type="Rhea" id="RHEA-COMP:10163"/>
        <dbReference type="ChEBI" id="CHEBI:15378"/>
        <dbReference type="ChEBI" id="CHEBI:73682"/>
        <dbReference type="ChEBI" id="CHEBI:74411"/>
        <dbReference type="ChEBI" id="CHEBI:74418"/>
        <dbReference type="ChEBI" id="CHEBI:456215"/>
        <dbReference type="EC" id="2.3.1.234"/>
    </reaction>
</comment>
<comment type="cofactor">
    <cofactor evidence="1">
        <name>Fe(2+)</name>
        <dbReference type="ChEBI" id="CHEBI:29033"/>
    </cofactor>
    <text evidence="1">Binds 1 Fe(2+) ion per subunit.</text>
</comment>
<comment type="subcellular location">
    <subcellularLocation>
        <location evidence="1">Cytoplasm</location>
    </subcellularLocation>
</comment>
<comment type="similarity">
    <text evidence="1">Belongs to the KAE1 / TsaD family.</text>
</comment>
<sequence>MNVLGIESTAHTFGVGIVSDDDSEIRILSNERDTFVPKQGGMKPSDLGRHHSEVAPEVLQKALIKANLSIRDINYIAVSLGPGIGPALRVGATIARALSLKYDIKLVPVNHGIAHIEIGRFTTRSKDPLILYLSGGNTIITTYLDGKYRIFGETLDIALGNMLDTFVREVGLAPPYIVNGVHQIDLCANKGGNFIELPYIVKGQDMSYSGLLTAALRATKNNRLEDVCYSVREVAFDMLLEATERALALTGKKEILVVGGVAASVSLKTKLYNLAKDWNVEVKIVPPEYSGDNGAMIAFTGLLEARHGVTIPVEKSIIRPRWRVDQVDVTWRLSEN</sequence>
<keyword id="KW-0012">Acyltransferase</keyword>
<keyword id="KW-0963">Cytoplasm</keyword>
<keyword id="KW-0408">Iron</keyword>
<keyword id="KW-0479">Metal-binding</keyword>
<keyword id="KW-1185">Reference proteome</keyword>
<keyword id="KW-0808">Transferase</keyword>
<keyword id="KW-0819">tRNA processing</keyword>
<accession>Q975Q7</accession>
<accession>F9VMV3</accession>
<protein>
    <recommendedName>
        <fullName evidence="1">tRNA N6-adenosine threonylcarbamoyltransferase</fullName>
        <ecNumber evidence="1">2.3.1.234</ecNumber>
    </recommendedName>
    <alternativeName>
        <fullName evidence="1">N6-L-threonylcarbamoyladenine synthase</fullName>
        <shortName evidence="1">t(6)A synthase</shortName>
    </alternativeName>
    <alternativeName>
        <fullName evidence="1">t(6)A37 threonylcarbamoyladenosine biosynthesis protein Kae1</fullName>
    </alternativeName>
    <alternativeName>
        <fullName evidence="1">tRNA threonylcarbamoyladenosine biosynthesis protein Kae1</fullName>
    </alternativeName>
</protein>